<sequence length="504" mass="54716">MAAAAVVHLSVHGRLRRSPELHARPYHRPSLLRCRAFKQEADNGGEEASSSPPPPTTAEARRRRKGPLYKLKAAIQGLAGSRSAAAEAYGGEYQRAVEKAEEIFFSVATQVGRYVITMMSSGVVLGVGFQLSGGDSQMNTLIWYSWLGGVIIGTMIGANSVLEEHCKAGPRNVVITGSTRGLGKALAREFLLSGDRVVIASRSPESVLQTINELEENIQEGLSVAKKKQREILLHAKVVGTSCDVCKPEDVKKLVNFAKDELGSIDIWINNAGTNKGFRPLVNFSDEDISQIVSTNLVGSLLCTREAMNVMQHQQKGGHVFNMDGAGSGGSSTPLTAVYGSTKCGLRQFQASLLKESRRSKVGVHTASPGMVLTDLLLSGSSLRNKQMFNLICELPETVARTLVPRMRVVKGSGKAINYLTPPRILLALVTAWVRRGRWFDEEGRAVYAAEADRIRNWAESRARFSFTDAMEMYTENTWVSVFSLSVVCAFIILSSSGGPLPGT</sequence>
<evidence type="ECO:0000250" key="1"/>
<evidence type="ECO:0000255" key="2"/>
<evidence type="ECO:0000256" key="3">
    <source>
        <dbReference type="SAM" id="MobiDB-lite"/>
    </source>
</evidence>
<evidence type="ECO:0000269" key="4">
    <source>
    </source>
</evidence>
<evidence type="ECO:0000269" key="5">
    <source>
    </source>
</evidence>
<evidence type="ECO:0000305" key="6"/>
<evidence type="ECO:0000305" key="7">
    <source>
    </source>
</evidence>
<organism>
    <name type="scientific">Oryza sativa subsp. japonica</name>
    <name type="common">Rice</name>
    <dbReference type="NCBI Taxonomy" id="39947"/>
    <lineage>
        <taxon>Eukaryota</taxon>
        <taxon>Viridiplantae</taxon>
        <taxon>Streptophyta</taxon>
        <taxon>Embryophyta</taxon>
        <taxon>Tracheophyta</taxon>
        <taxon>Spermatophyta</taxon>
        <taxon>Magnoliopsida</taxon>
        <taxon>Liliopsida</taxon>
        <taxon>Poales</taxon>
        <taxon>Poaceae</taxon>
        <taxon>BOP clade</taxon>
        <taxon>Oryzoideae</taxon>
        <taxon>Oryzeae</taxon>
        <taxon>Oryzinae</taxon>
        <taxon>Oryza</taxon>
        <taxon>Oryza sativa</taxon>
    </lineage>
</organism>
<comment type="function">
    <text>Required for proper chloroplast degradation. Involved in chlorophyll b degradation.</text>
</comment>
<comment type="catalytic activity">
    <reaction>
        <text>7(1)-hydroxychlorophyllide a + NAD(+) = chlorophyllide b + NADH + H(+)</text>
        <dbReference type="Rhea" id="RHEA:24768"/>
        <dbReference type="ChEBI" id="CHEBI:15378"/>
        <dbReference type="ChEBI" id="CHEBI:57540"/>
        <dbReference type="ChEBI" id="CHEBI:57945"/>
        <dbReference type="ChEBI" id="CHEBI:83356"/>
        <dbReference type="ChEBI" id="CHEBI:83357"/>
        <dbReference type="EC" id="1.1.1.294"/>
    </reaction>
</comment>
<comment type="catalytic activity">
    <reaction>
        <text>7(1)-hydroxychlorophyllide a + NADP(+) = chlorophyllide b + NADPH + H(+)</text>
        <dbReference type="Rhea" id="RHEA:24772"/>
        <dbReference type="ChEBI" id="CHEBI:15378"/>
        <dbReference type="ChEBI" id="CHEBI:57783"/>
        <dbReference type="ChEBI" id="CHEBI:58349"/>
        <dbReference type="ChEBI" id="CHEBI:83356"/>
        <dbReference type="ChEBI" id="CHEBI:83357"/>
        <dbReference type="EC" id="1.1.1.294"/>
    </reaction>
</comment>
<comment type="subunit">
    <text evidence="5">Interacts with NOL to form a complex that acts as a chlorophyll b reductase.</text>
</comment>
<comment type="subcellular location">
    <subcellularLocation>
        <location evidence="7">Plastid</location>
        <location evidence="7">Chloroplast thylakoid membrane</location>
        <topology evidence="7">Multi-pass membrane protein</topology>
    </subcellularLocation>
</comment>
<comment type="tissue specificity">
    <text evidence="4">Expressed in leaves and stems. Also detected in non-photosynthetic tissues such as roots.</text>
</comment>
<comment type="developmental stage">
    <text evidence="4">Strongly expressed in late-senescing leaves.</text>
</comment>
<comment type="induction">
    <text evidence="4">Up-regulated by dark treatment, abscisic acid and methyl jasmonate.</text>
</comment>
<comment type="disruption phenotype">
    <text evidence="4">Stay-green phenotype during senescence. Grana stacks fused into large stable stacks during semescence.</text>
</comment>
<comment type="miscellaneous">
    <text>No chlorophyll b reductase activity detected in vitro with a recombinant protein produced in a heterologous system.</text>
</comment>
<comment type="similarity">
    <text evidence="6">Belongs to the short-chain dehydrogenases/reductases (SDR) family.</text>
</comment>
<feature type="transit peptide" description="Chloroplast" evidence="2">
    <location>
        <begin position="1"/>
        <end position="33"/>
    </location>
</feature>
<feature type="chain" id="PRO_0000391413" description="Probable chlorophyll(ide) b reductase NYC1, chloroplastic">
    <location>
        <begin position="34"/>
        <end position="504"/>
    </location>
</feature>
<feature type="transmembrane region" description="Helical" evidence="2">
    <location>
        <begin position="114"/>
        <end position="134"/>
    </location>
</feature>
<feature type="transmembrane region" description="Helical" evidence="2">
    <location>
        <begin position="141"/>
        <end position="161"/>
    </location>
</feature>
<feature type="transmembrane region" description="Helical" evidence="2">
    <location>
        <begin position="479"/>
        <end position="499"/>
    </location>
</feature>
<feature type="region of interest" description="Disordered" evidence="3">
    <location>
        <begin position="41"/>
        <end position="63"/>
    </location>
</feature>
<feature type="active site" description="Proton acceptor" evidence="1">
    <location>
        <position position="339"/>
    </location>
</feature>
<feature type="binding site" evidence="1">
    <location>
        <begin position="175"/>
        <end position="199"/>
    </location>
    <ligand>
        <name>NAD(+)</name>
        <dbReference type="ChEBI" id="CHEBI:57540"/>
    </ligand>
</feature>
<accession>Q5N800</accession>
<accession>A0A0P0V014</accession>
<keyword id="KW-0881">Chlorophyll catabolism</keyword>
<keyword id="KW-0150">Chloroplast</keyword>
<keyword id="KW-0472">Membrane</keyword>
<keyword id="KW-0520">NAD</keyword>
<keyword id="KW-0560">Oxidoreductase</keyword>
<keyword id="KW-0934">Plastid</keyword>
<keyword id="KW-1185">Reference proteome</keyword>
<keyword id="KW-0793">Thylakoid</keyword>
<keyword id="KW-0809">Transit peptide</keyword>
<keyword id="KW-0812">Transmembrane</keyword>
<keyword id="KW-1133">Transmembrane helix</keyword>
<gene>
    <name type="primary">NYC1</name>
    <name type="ordered locus">Os01g0227100</name>
    <name type="ordered locus">LOC_Os01g12710</name>
    <name type="ORF">OsJ_00960</name>
    <name type="ORF">P0443E07.35</name>
    <name type="ORF">P0452F10.6</name>
</gene>
<reference key="1">
    <citation type="journal article" date="2007" name="Plant Cell">
        <title>Rice NON-YELLOW COLORING1 is involved in light-harvesting complex II and grana degradation during leaf senescence.</title>
        <authorList>
            <person name="Kusaba M."/>
            <person name="Ito H."/>
            <person name="Morita R."/>
            <person name="Iida S."/>
            <person name="Sato Y."/>
            <person name="Fujimoto M."/>
            <person name="Kawasaki S."/>
            <person name="Tanaka R."/>
            <person name="Hirochika H."/>
            <person name="Nishimura M."/>
            <person name="Tanaka A."/>
        </authorList>
    </citation>
    <scope>NUCLEOTIDE SEQUENCE [MRNA]</scope>
    <scope>SUBCELLULAR LOCATION</scope>
    <scope>TISSUE SPECIFICITY</scope>
    <scope>DEVELOPMENTAL STAGE</scope>
    <scope>INDUCTION</scope>
    <scope>DISRUPTION PHENOTYPE</scope>
</reference>
<reference key="2">
    <citation type="journal article" date="2002" name="Nature">
        <title>The genome sequence and structure of rice chromosome 1.</title>
        <authorList>
            <person name="Sasaki T."/>
            <person name="Matsumoto T."/>
            <person name="Yamamoto K."/>
            <person name="Sakata K."/>
            <person name="Baba T."/>
            <person name="Katayose Y."/>
            <person name="Wu J."/>
            <person name="Niimura Y."/>
            <person name="Cheng Z."/>
            <person name="Nagamura Y."/>
            <person name="Antonio B.A."/>
            <person name="Kanamori H."/>
            <person name="Hosokawa S."/>
            <person name="Masukawa M."/>
            <person name="Arikawa K."/>
            <person name="Chiden Y."/>
            <person name="Hayashi M."/>
            <person name="Okamoto M."/>
            <person name="Ando T."/>
            <person name="Aoki H."/>
            <person name="Arita K."/>
            <person name="Hamada M."/>
            <person name="Harada C."/>
            <person name="Hijishita S."/>
            <person name="Honda M."/>
            <person name="Ichikawa Y."/>
            <person name="Idonuma A."/>
            <person name="Iijima M."/>
            <person name="Ikeda M."/>
            <person name="Ikeno M."/>
            <person name="Ito S."/>
            <person name="Ito T."/>
            <person name="Ito Y."/>
            <person name="Ito Y."/>
            <person name="Iwabuchi A."/>
            <person name="Kamiya K."/>
            <person name="Karasawa W."/>
            <person name="Katagiri S."/>
            <person name="Kikuta A."/>
            <person name="Kobayashi N."/>
            <person name="Kono I."/>
            <person name="Machita K."/>
            <person name="Maehara T."/>
            <person name="Mizuno H."/>
            <person name="Mizubayashi T."/>
            <person name="Mukai Y."/>
            <person name="Nagasaki H."/>
            <person name="Nakashima M."/>
            <person name="Nakama Y."/>
            <person name="Nakamichi Y."/>
            <person name="Nakamura M."/>
            <person name="Namiki N."/>
            <person name="Negishi M."/>
            <person name="Ohta I."/>
            <person name="Ono N."/>
            <person name="Saji S."/>
            <person name="Sakai K."/>
            <person name="Shibata M."/>
            <person name="Shimokawa T."/>
            <person name="Shomura A."/>
            <person name="Song J."/>
            <person name="Takazaki Y."/>
            <person name="Terasawa K."/>
            <person name="Tsuji K."/>
            <person name="Waki K."/>
            <person name="Yamagata H."/>
            <person name="Yamane H."/>
            <person name="Yoshiki S."/>
            <person name="Yoshihara R."/>
            <person name="Yukawa K."/>
            <person name="Zhong H."/>
            <person name="Iwama H."/>
            <person name="Endo T."/>
            <person name="Ito H."/>
            <person name="Hahn J.H."/>
            <person name="Kim H.-I."/>
            <person name="Eun M.-Y."/>
            <person name="Yano M."/>
            <person name="Jiang J."/>
            <person name="Gojobori T."/>
        </authorList>
    </citation>
    <scope>NUCLEOTIDE SEQUENCE [LARGE SCALE GENOMIC DNA]</scope>
    <source>
        <strain>cv. Nipponbare</strain>
    </source>
</reference>
<reference key="3">
    <citation type="journal article" date="2005" name="Nature">
        <title>The map-based sequence of the rice genome.</title>
        <authorList>
            <consortium name="International rice genome sequencing project (IRGSP)"/>
        </authorList>
    </citation>
    <scope>NUCLEOTIDE SEQUENCE [LARGE SCALE GENOMIC DNA]</scope>
    <source>
        <strain>cv. Nipponbare</strain>
    </source>
</reference>
<reference key="4">
    <citation type="journal article" date="2008" name="Nucleic Acids Res.">
        <title>The rice annotation project database (RAP-DB): 2008 update.</title>
        <authorList>
            <consortium name="The rice annotation project (RAP)"/>
        </authorList>
    </citation>
    <scope>GENOME REANNOTATION</scope>
    <source>
        <strain>cv. Nipponbare</strain>
    </source>
</reference>
<reference key="5">
    <citation type="journal article" date="2013" name="Rice">
        <title>Improvement of the Oryza sativa Nipponbare reference genome using next generation sequence and optical map data.</title>
        <authorList>
            <person name="Kawahara Y."/>
            <person name="de la Bastide M."/>
            <person name="Hamilton J.P."/>
            <person name="Kanamori H."/>
            <person name="McCombie W.R."/>
            <person name="Ouyang S."/>
            <person name="Schwartz D.C."/>
            <person name="Tanaka T."/>
            <person name="Wu J."/>
            <person name="Zhou S."/>
            <person name="Childs K.L."/>
            <person name="Davidson R.M."/>
            <person name="Lin H."/>
            <person name="Quesada-Ocampo L."/>
            <person name="Vaillancourt B."/>
            <person name="Sakai H."/>
            <person name="Lee S.S."/>
            <person name="Kim J."/>
            <person name="Numa H."/>
            <person name="Itoh T."/>
            <person name="Buell C.R."/>
            <person name="Matsumoto T."/>
        </authorList>
    </citation>
    <scope>GENOME REANNOTATION</scope>
    <source>
        <strain>cv. Nipponbare</strain>
    </source>
</reference>
<reference key="6">
    <citation type="journal article" date="2005" name="PLoS Biol.">
        <title>The genomes of Oryza sativa: a history of duplications.</title>
        <authorList>
            <person name="Yu J."/>
            <person name="Wang J."/>
            <person name="Lin W."/>
            <person name="Li S."/>
            <person name="Li H."/>
            <person name="Zhou J."/>
            <person name="Ni P."/>
            <person name="Dong W."/>
            <person name="Hu S."/>
            <person name="Zeng C."/>
            <person name="Zhang J."/>
            <person name="Zhang Y."/>
            <person name="Li R."/>
            <person name="Xu Z."/>
            <person name="Li S."/>
            <person name="Li X."/>
            <person name="Zheng H."/>
            <person name="Cong L."/>
            <person name="Lin L."/>
            <person name="Yin J."/>
            <person name="Geng J."/>
            <person name="Li G."/>
            <person name="Shi J."/>
            <person name="Liu J."/>
            <person name="Lv H."/>
            <person name="Li J."/>
            <person name="Wang J."/>
            <person name="Deng Y."/>
            <person name="Ran L."/>
            <person name="Shi X."/>
            <person name="Wang X."/>
            <person name="Wu Q."/>
            <person name="Li C."/>
            <person name="Ren X."/>
            <person name="Wang J."/>
            <person name="Wang X."/>
            <person name="Li D."/>
            <person name="Liu D."/>
            <person name="Zhang X."/>
            <person name="Ji Z."/>
            <person name="Zhao W."/>
            <person name="Sun Y."/>
            <person name="Zhang Z."/>
            <person name="Bao J."/>
            <person name="Han Y."/>
            <person name="Dong L."/>
            <person name="Ji J."/>
            <person name="Chen P."/>
            <person name="Wu S."/>
            <person name="Liu J."/>
            <person name="Xiao Y."/>
            <person name="Bu D."/>
            <person name="Tan J."/>
            <person name="Yang L."/>
            <person name="Ye C."/>
            <person name="Zhang J."/>
            <person name="Xu J."/>
            <person name="Zhou Y."/>
            <person name="Yu Y."/>
            <person name="Zhang B."/>
            <person name="Zhuang S."/>
            <person name="Wei H."/>
            <person name="Liu B."/>
            <person name="Lei M."/>
            <person name="Yu H."/>
            <person name="Li Y."/>
            <person name="Xu H."/>
            <person name="Wei S."/>
            <person name="He X."/>
            <person name="Fang L."/>
            <person name="Zhang Z."/>
            <person name="Zhang Y."/>
            <person name="Huang X."/>
            <person name="Su Z."/>
            <person name="Tong W."/>
            <person name="Li J."/>
            <person name="Tong Z."/>
            <person name="Li S."/>
            <person name="Ye J."/>
            <person name="Wang L."/>
            <person name="Fang L."/>
            <person name="Lei T."/>
            <person name="Chen C.-S."/>
            <person name="Chen H.-C."/>
            <person name="Xu Z."/>
            <person name="Li H."/>
            <person name="Huang H."/>
            <person name="Zhang F."/>
            <person name="Xu H."/>
            <person name="Li N."/>
            <person name="Zhao C."/>
            <person name="Li S."/>
            <person name="Dong L."/>
            <person name="Huang Y."/>
            <person name="Li L."/>
            <person name="Xi Y."/>
            <person name="Qi Q."/>
            <person name="Li W."/>
            <person name="Zhang B."/>
            <person name="Hu W."/>
            <person name="Zhang Y."/>
            <person name="Tian X."/>
            <person name="Jiao Y."/>
            <person name="Liang X."/>
            <person name="Jin J."/>
            <person name="Gao L."/>
            <person name="Zheng W."/>
            <person name="Hao B."/>
            <person name="Liu S.-M."/>
            <person name="Wang W."/>
            <person name="Yuan L."/>
            <person name="Cao M."/>
            <person name="McDermott J."/>
            <person name="Samudrala R."/>
            <person name="Wang J."/>
            <person name="Wong G.K.-S."/>
            <person name="Yang H."/>
        </authorList>
    </citation>
    <scope>NUCLEOTIDE SEQUENCE [LARGE SCALE GENOMIC DNA]</scope>
    <source>
        <strain>cv. Nipponbare</strain>
    </source>
</reference>
<reference key="7">
    <citation type="journal article" date="2003" name="Science">
        <title>Collection, mapping, and annotation of over 28,000 cDNA clones from japonica rice.</title>
        <authorList>
            <consortium name="The rice full-length cDNA consortium"/>
        </authorList>
    </citation>
    <scope>NUCLEOTIDE SEQUENCE [LARGE SCALE MRNA]</scope>
    <source>
        <strain>cv. Nipponbare</strain>
    </source>
</reference>
<reference key="8">
    <citation type="journal article" date="2009" name="Plant J.">
        <title>Two short-chain dehydrogenase/reductases, NON-YELLOW COLORING 1 and NYC1-LIKE, are required for chlorophyll b and light-harvesting complex II degradation during senescence in rice.</title>
        <authorList>
            <person name="Sato Y."/>
            <person name="Morita R."/>
            <person name="Katsuma S."/>
            <person name="Nishimura M."/>
            <person name="Tanaka A."/>
            <person name="Kusaba M."/>
        </authorList>
    </citation>
    <scope>INTERACTION WITH NOL</scope>
</reference>
<name>NYC1_ORYSJ</name>
<proteinExistence type="evidence at protein level"/>
<dbReference type="EC" id="1.1.1.294"/>
<dbReference type="EMBL" id="AB255025">
    <property type="protein sequence ID" value="BAF49740.1"/>
    <property type="molecule type" value="mRNA"/>
</dbReference>
<dbReference type="EMBL" id="AP002900">
    <property type="protein sequence ID" value="BAD81513.1"/>
    <property type="molecule type" value="Genomic_DNA"/>
</dbReference>
<dbReference type="EMBL" id="AP003434">
    <property type="protein sequence ID" value="BAD82407.1"/>
    <property type="molecule type" value="Genomic_DNA"/>
</dbReference>
<dbReference type="EMBL" id="AP008207">
    <property type="protein sequence ID" value="BAF04382.1"/>
    <property type="molecule type" value="Genomic_DNA"/>
</dbReference>
<dbReference type="EMBL" id="AP014957">
    <property type="protein sequence ID" value="BAS71128.1"/>
    <property type="molecule type" value="Genomic_DNA"/>
</dbReference>
<dbReference type="EMBL" id="CM000138">
    <property type="protein sequence ID" value="EEE54154.1"/>
    <property type="molecule type" value="Genomic_DNA"/>
</dbReference>
<dbReference type="EMBL" id="AK068523">
    <property type="protein sequence ID" value="BAG90942.1"/>
    <property type="molecule type" value="mRNA"/>
</dbReference>
<dbReference type="RefSeq" id="XP_015621887.1">
    <property type="nucleotide sequence ID" value="XM_015766401.1"/>
</dbReference>
<dbReference type="SMR" id="Q5N800"/>
<dbReference type="FunCoup" id="Q5N800">
    <property type="interactions" value="37"/>
</dbReference>
<dbReference type="STRING" id="39947.Q5N800"/>
<dbReference type="PaxDb" id="39947-Q5N800"/>
<dbReference type="EnsemblPlants" id="Os01t0227100-01">
    <property type="protein sequence ID" value="Os01t0227100-01"/>
    <property type="gene ID" value="Os01g0227100"/>
</dbReference>
<dbReference type="Gramene" id="Os01t0227100-01">
    <property type="protein sequence ID" value="Os01t0227100-01"/>
    <property type="gene ID" value="Os01g0227100"/>
</dbReference>
<dbReference type="KEGG" id="dosa:Os01g0227100"/>
<dbReference type="eggNOG" id="KOG0725">
    <property type="taxonomic scope" value="Eukaryota"/>
</dbReference>
<dbReference type="InParanoid" id="Q5N800"/>
<dbReference type="OMA" id="VQPCRSF"/>
<dbReference type="OrthoDB" id="3592703at2759"/>
<dbReference type="BRENDA" id="1.1.1.294">
    <property type="organism ID" value="4460"/>
</dbReference>
<dbReference type="Proteomes" id="UP000000763">
    <property type="component" value="Chromosome 1"/>
</dbReference>
<dbReference type="Proteomes" id="UP000007752">
    <property type="component" value="Chromosome 1"/>
</dbReference>
<dbReference type="Proteomes" id="UP000059680">
    <property type="component" value="Chromosome 1"/>
</dbReference>
<dbReference type="ExpressionAtlas" id="Q5N800">
    <property type="expression patterns" value="baseline and differential"/>
</dbReference>
<dbReference type="GO" id="GO:0009535">
    <property type="term" value="C:chloroplast thylakoid membrane"/>
    <property type="evidence" value="ECO:0007669"/>
    <property type="project" value="UniProtKB-SubCell"/>
</dbReference>
<dbReference type="GO" id="GO:0009536">
    <property type="term" value="C:plastid"/>
    <property type="evidence" value="ECO:0000314"/>
    <property type="project" value="Gramene"/>
</dbReference>
<dbReference type="GO" id="GO:0034256">
    <property type="term" value="F:chlorophyll(ide) b reductase activity"/>
    <property type="evidence" value="ECO:0000318"/>
    <property type="project" value="GO_Central"/>
</dbReference>
<dbReference type="GO" id="GO:0016491">
    <property type="term" value="F:oxidoreductase activity"/>
    <property type="evidence" value="ECO:0000314"/>
    <property type="project" value="Gramene"/>
</dbReference>
<dbReference type="GO" id="GO:0015996">
    <property type="term" value="P:chlorophyll catabolic process"/>
    <property type="evidence" value="ECO:0000315"/>
    <property type="project" value="Gramene"/>
</dbReference>
<dbReference type="GO" id="GO:0010304">
    <property type="term" value="P:PSII associated light-harvesting complex II catabolic process"/>
    <property type="evidence" value="ECO:0000315"/>
    <property type="project" value="Gramene"/>
</dbReference>
<dbReference type="CDD" id="cd05233">
    <property type="entry name" value="SDR_c"/>
    <property type="match status" value="1"/>
</dbReference>
<dbReference type="FunFam" id="3.40.50.720:FF:000223">
    <property type="entry name" value="Chlorophyll(Ide) b reductase NOL, chloroplastic"/>
    <property type="match status" value="1"/>
</dbReference>
<dbReference type="Gene3D" id="3.40.50.720">
    <property type="entry name" value="NAD(P)-binding Rossmann-like Domain"/>
    <property type="match status" value="1"/>
</dbReference>
<dbReference type="InterPro" id="IPR052625">
    <property type="entry name" value="Chl_b_Red"/>
</dbReference>
<dbReference type="InterPro" id="IPR036291">
    <property type="entry name" value="NAD(P)-bd_dom_sf"/>
</dbReference>
<dbReference type="InterPro" id="IPR002347">
    <property type="entry name" value="SDR_fam"/>
</dbReference>
<dbReference type="PANTHER" id="PTHR24314:SF21">
    <property type="entry name" value="CHLOROPHYLL(IDE) B REDUCTASE NYC1, CHLOROPLASTIC-RELATED"/>
    <property type="match status" value="1"/>
</dbReference>
<dbReference type="PANTHER" id="PTHR24314">
    <property type="entry name" value="NON-SPECIFIC LIPID TRANSFER PROTEIN-RELATED"/>
    <property type="match status" value="1"/>
</dbReference>
<dbReference type="Pfam" id="PF00106">
    <property type="entry name" value="adh_short"/>
    <property type="match status" value="1"/>
</dbReference>
<dbReference type="PRINTS" id="PR00081">
    <property type="entry name" value="GDHRDH"/>
</dbReference>
<dbReference type="SUPFAM" id="SSF51735">
    <property type="entry name" value="NAD(P)-binding Rossmann-fold domains"/>
    <property type="match status" value="1"/>
</dbReference>
<protein>
    <recommendedName>
        <fullName>Probable chlorophyll(ide) b reductase NYC1, chloroplastic</fullName>
        <ecNumber>1.1.1.294</ecNumber>
    </recommendedName>
    <alternativeName>
        <fullName>Protein NON-YELLOW COLORING 1</fullName>
        <shortName>OsNYC1</shortName>
    </alternativeName>
</protein>